<organism>
    <name type="scientific">Oryza sativa subsp. japonica</name>
    <name type="common">Rice</name>
    <dbReference type="NCBI Taxonomy" id="39947"/>
    <lineage>
        <taxon>Eukaryota</taxon>
        <taxon>Viridiplantae</taxon>
        <taxon>Streptophyta</taxon>
        <taxon>Embryophyta</taxon>
        <taxon>Tracheophyta</taxon>
        <taxon>Spermatophyta</taxon>
        <taxon>Magnoliopsida</taxon>
        <taxon>Liliopsida</taxon>
        <taxon>Poales</taxon>
        <taxon>Poaceae</taxon>
        <taxon>BOP clade</taxon>
        <taxon>Oryzoideae</taxon>
        <taxon>Oryzeae</taxon>
        <taxon>Oryzinae</taxon>
        <taxon>Oryza</taxon>
        <taxon>Oryza sativa</taxon>
    </lineage>
</organism>
<reference key="1">
    <citation type="journal article" date="2003" name="Science">
        <title>In-depth view of structure, activity, and evolution of rice chromosome 10.</title>
        <authorList>
            <person name="Yu Y."/>
            <person name="Rambo T."/>
            <person name="Currie J."/>
            <person name="Saski C."/>
            <person name="Kim H.-R."/>
            <person name="Collura K."/>
            <person name="Thompson S."/>
            <person name="Simmons J."/>
            <person name="Yang T.-J."/>
            <person name="Nah G."/>
            <person name="Patel A.J."/>
            <person name="Thurmond S."/>
            <person name="Henry D."/>
            <person name="Oates R."/>
            <person name="Palmer M."/>
            <person name="Pries G."/>
            <person name="Gibson J."/>
            <person name="Anderson H."/>
            <person name="Paradkar M."/>
            <person name="Crane L."/>
            <person name="Dale J."/>
            <person name="Carver M.B."/>
            <person name="Wood T."/>
            <person name="Frisch D."/>
            <person name="Engler F."/>
            <person name="Soderlund C."/>
            <person name="Palmer L.E."/>
            <person name="Teytelman L."/>
            <person name="Nascimento L."/>
            <person name="De la Bastide M."/>
            <person name="Spiegel L."/>
            <person name="Ware D."/>
            <person name="O'Shaughnessy A."/>
            <person name="Dike S."/>
            <person name="Dedhia N."/>
            <person name="Preston R."/>
            <person name="Huang E."/>
            <person name="Ferraro K."/>
            <person name="Kuit K."/>
            <person name="Miller B."/>
            <person name="Zutavern T."/>
            <person name="Katzenberger F."/>
            <person name="Muller S."/>
            <person name="Balija V."/>
            <person name="Martienssen R.A."/>
            <person name="Stein L."/>
            <person name="Minx P."/>
            <person name="Johnson D."/>
            <person name="Cordum H."/>
            <person name="Mardis E."/>
            <person name="Cheng Z."/>
            <person name="Jiang J."/>
            <person name="Wilson R."/>
            <person name="McCombie W.R."/>
            <person name="Wing R.A."/>
            <person name="Yuan Q."/>
            <person name="Ouyang S."/>
            <person name="Liu J."/>
            <person name="Jones K.M."/>
            <person name="Gansberger K."/>
            <person name="Moffat K."/>
            <person name="Hill J."/>
            <person name="Tsitrin T."/>
            <person name="Overton L."/>
            <person name="Bera J."/>
            <person name="Kim M."/>
            <person name="Jin S."/>
            <person name="Tallon L."/>
            <person name="Ciecko A."/>
            <person name="Pai G."/>
            <person name="Van Aken S."/>
            <person name="Utterback T."/>
            <person name="Reidmuller S."/>
            <person name="Bormann J."/>
            <person name="Feldblyum T."/>
            <person name="Hsiao J."/>
            <person name="Zismann V."/>
            <person name="Blunt S."/>
            <person name="de Vazeille A.R."/>
            <person name="Shaffer T."/>
            <person name="Koo H."/>
            <person name="Suh B."/>
            <person name="Yang Q."/>
            <person name="Haas B."/>
            <person name="Peterson J."/>
            <person name="Pertea M."/>
            <person name="Volfovsky N."/>
            <person name="Wortman J."/>
            <person name="White O."/>
            <person name="Salzberg S.L."/>
            <person name="Fraser C.M."/>
            <person name="Buell C.R."/>
            <person name="Messing J."/>
            <person name="Song R."/>
            <person name="Fuks G."/>
            <person name="Llaca V."/>
            <person name="Kovchak S."/>
            <person name="Young S."/>
            <person name="Bowers J.E."/>
            <person name="Paterson A.H."/>
            <person name="Johns M.A."/>
            <person name="Mao L."/>
            <person name="Pan H."/>
            <person name="Dean R.A."/>
        </authorList>
    </citation>
    <scope>NUCLEOTIDE SEQUENCE [LARGE SCALE GENOMIC DNA]</scope>
    <source>
        <strain>cv. Nipponbare</strain>
    </source>
</reference>
<reference key="2">
    <citation type="journal article" date="2005" name="Nature">
        <title>The map-based sequence of the rice genome.</title>
        <authorList>
            <consortium name="International rice genome sequencing project (IRGSP)"/>
        </authorList>
    </citation>
    <scope>NUCLEOTIDE SEQUENCE [LARGE SCALE GENOMIC DNA]</scope>
    <source>
        <strain>cv. Nipponbare</strain>
    </source>
</reference>
<reference key="3">
    <citation type="journal article" date="2008" name="Nucleic Acids Res.">
        <title>The rice annotation project database (RAP-DB): 2008 update.</title>
        <authorList>
            <consortium name="The rice annotation project (RAP)"/>
        </authorList>
    </citation>
    <scope>GENOME REANNOTATION</scope>
    <source>
        <strain>cv. Nipponbare</strain>
    </source>
</reference>
<reference key="4">
    <citation type="journal article" date="2013" name="Rice">
        <title>Improvement of the Oryza sativa Nipponbare reference genome using next generation sequence and optical map data.</title>
        <authorList>
            <person name="Kawahara Y."/>
            <person name="de la Bastide M."/>
            <person name="Hamilton J.P."/>
            <person name="Kanamori H."/>
            <person name="McCombie W.R."/>
            <person name="Ouyang S."/>
            <person name="Schwartz D.C."/>
            <person name="Tanaka T."/>
            <person name="Wu J."/>
            <person name="Zhou S."/>
            <person name="Childs K.L."/>
            <person name="Davidson R.M."/>
            <person name="Lin H."/>
            <person name="Quesada-Ocampo L."/>
            <person name="Vaillancourt B."/>
            <person name="Sakai H."/>
            <person name="Lee S.S."/>
            <person name="Kim J."/>
            <person name="Numa H."/>
            <person name="Itoh T."/>
            <person name="Buell C.R."/>
            <person name="Matsumoto T."/>
        </authorList>
    </citation>
    <scope>GENOME REANNOTATION</scope>
    <source>
        <strain>cv. Nipponbare</strain>
    </source>
</reference>
<reference key="5">
    <citation type="journal article" date="2009" name="Plant Mol. Biol.">
        <title>Identification and expression profiling analysis of TIFY family genes involved in stress and phytohormone responses in rice.</title>
        <authorList>
            <person name="Ye H."/>
            <person name="Du H."/>
            <person name="Tang N."/>
            <person name="Li X."/>
            <person name="Xiong L."/>
        </authorList>
    </citation>
    <scope>GENE FAMILY</scope>
    <scope>NOMENCLATURE</scope>
</reference>
<evidence type="ECO:0000250" key="1">
    <source>
        <dbReference type="UniProtKB" id="Q7XPM8"/>
    </source>
</evidence>
<evidence type="ECO:0000255" key="2"/>
<evidence type="ECO:0000255" key="3">
    <source>
        <dbReference type="PROSITE-ProRule" id="PRU00650"/>
    </source>
</evidence>
<evidence type="ECO:0000255" key="4">
    <source>
        <dbReference type="PROSITE-ProRule" id="PRU00768"/>
    </source>
</evidence>
<evidence type="ECO:0000256" key="5">
    <source>
        <dbReference type="SAM" id="MobiDB-lite"/>
    </source>
</evidence>
<evidence type="ECO:0000303" key="6">
    <source>
    </source>
</evidence>
<evidence type="ECO:0000305" key="7"/>
<evidence type="ECO:0000312" key="8">
    <source>
        <dbReference type="EMBL" id="AAP53565.1"/>
    </source>
</evidence>
<protein>
    <recommendedName>
        <fullName evidence="7">Protein TIFY 11f</fullName>
        <shortName evidence="6">OsTIFY11f</shortName>
    </recommendedName>
    <alternativeName>
        <fullName evidence="7">Jasmonate ZIM domain-containing protein 14</fullName>
        <shortName evidence="6">OsJAZ14</shortName>
    </alternativeName>
</protein>
<accession>Q7XEZ4</accession>
<proteinExistence type="inferred from homology"/>
<sequence length="330" mass="35135">MAVSDHHCGGGGRSWRFAVACGVLSRCVKAEAAAAANGRHRHHPTMLLMPGADVEPDVREEAAAAAQLKIMYGGRMLVFDDFFPAGGAVVELVRAAARAGQDVRRAGAARRRVGDSRGLDAGLPVVRKVSLQRFVEKRRRMRVYHILYTDKSSHHVPGPGRYRSWQCRIIIAAVAGAGGFVVACGVLSRCVKAEAAAAAANGRRHHHHHHTTMLLMPGADVEPDVREEAAAAAQLKIMYGGRMLVFDDFFPAGGAVVELVRAAARAGRDDDGARARRRPAGGEEGVAAAVRGEEKSQAARGDGAVHTRHSPPMLPARTPGSGRTDDAAFY</sequence>
<dbReference type="EMBL" id="DP000086">
    <property type="protein sequence ID" value="AAP53565.1"/>
    <property type="molecule type" value="Genomic_DNA"/>
</dbReference>
<dbReference type="EMBL" id="AP008216">
    <property type="status" value="NOT_ANNOTATED_CDS"/>
    <property type="molecule type" value="Genomic_DNA"/>
</dbReference>
<dbReference type="EMBL" id="AP014966">
    <property type="status" value="NOT_ANNOTATED_CDS"/>
    <property type="molecule type" value="Genomic_DNA"/>
</dbReference>
<dbReference type="SMR" id="Q7XEZ4"/>
<dbReference type="STRING" id="39947.Q7XEZ4"/>
<dbReference type="PaxDb" id="39947-Q7XEZ4"/>
<dbReference type="EnsemblPlants" id="Os10t0391801-01">
    <property type="protein sequence ID" value="Os10t0391801-01"/>
    <property type="gene ID" value="Os10g0391801"/>
</dbReference>
<dbReference type="Gramene" id="Os10t0391801-01">
    <property type="protein sequence ID" value="Os10t0391801-01"/>
    <property type="gene ID" value="Os10g0391801"/>
</dbReference>
<dbReference type="InParanoid" id="Q7XEZ4"/>
<dbReference type="Proteomes" id="UP000000763">
    <property type="component" value="Chromosome 10"/>
</dbReference>
<dbReference type="Proteomes" id="UP000059680">
    <property type="component" value="Chromosome 10"/>
</dbReference>
<dbReference type="GO" id="GO:0005634">
    <property type="term" value="C:nucleus"/>
    <property type="evidence" value="ECO:0000318"/>
    <property type="project" value="GO_Central"/>
</dbReference>
<dbReference type="GO" id="GO:0031347">
    <property type="term" value="P:regulation of defense response"/>
    <property type="evidence" value="ECO:0000318"/>
    <property type="project" value="GO_Central"/>
</dbReference>
<dbReference type="GO" id="GO:2000022">
    <property type="term" value="P:regulation of jasmonic acid mediated signaling pathway"/>
    <property type="evidence" value="ECO:0000318"/>
    <property type="project" value="GO_Central"/>
</dbReference>
<dbReference type="GO" id="GO:0009611">
    <property type="term" value="P:response to wounding"/>
    <property type="evidence" value="ECO:0000318"/>
    <property type="project" value="GO_Central"/>
</dbReference>
<dbReference type="InterPro" id="IPR018467">
    <property type="entry name" value="CCT_CS"/>
</dbReference>
<dbReference type="InterPro" id="IPR040390">
    <property type="entry name" value="TIFY/JAZ"/>
</dbReference>
<dbReference type="InterPro" id="IPR010399">
    <property type="entry name" value="Tify_dom"/>
</dbReference>
<dbReference type="PANTHER" id="PTHR33077:SF97">
    <property type="entry name" value="PROTEIN TIFY 11E"/>
    <property type="match status" value="1"/>
</dbReference>
<dbReference type="PANTHER" id="PTHR33077">
    <property type="entry name" value="PROTEIN TIFY 4A-RELATED-RELATED"/>
    <property type="match status" value="1"/>
</dbReference>
<dbReference type="Pfam" id="PF09425">
    <property type="entry name" value="Jas_motif"/>
    <property type="match status" value="1"/>
</dbReference>
<dbReference type="PROSITE" id="PS51320">
    <property type="entry name" value="TIFY"/>
    <property type="match status" value="2"/>
</dbReference>
<name>TI11F_ORYSJ</name>
<gene>
    <name evidence="6" type="primary">TIFY11F</name>
    <name evidence="6" type="synonym">JAZ14</name>
    <name evidence="7" type="ordered locus">Os10g0391801</name>
    <name evidence="8" type="ordered locus">LOC_Os10g25250</name>
</gene>
<keyword id="KW-1184">Jasmonic acid signaling pathway</keyword>
<keyword id="KW-0539">Nucleus</keyword>
<keyword id="KW-1185">Reference proteome</keyword>
<keyword id="KW-0677">Repeat</keyword>
<keyword id="KW-0804">Transcription</keyword>
<keyword id="KW-0805">Transcription regulation</keyword>
<keyword id="KW-0832">Ubl conjugation</keyword>
<feature type="chain" id="PRO_0000434862" description="Protein TIFY 11f">
    <location>
        <begin position="1"/>
        <end position="330"/>
    </location>
</feature>
<feature type="domain" description="Tify 1" evidence="3">
    <location>
        <begin position="61"/>
        <end position="97"/>
    </location>
</feature>
<feature type="domain" description="Tify 2" evidence="3">
    <location>
        <begin position="228"/>
        <end position="264"/>
    </location>
</feature>
<feature type="region of interest" description="Disordered" evidence="5">
    <location>
        <begin position="267"/>
        <end position="330"/>
    </location>
</feature>
<feature type="short sequence motif" description="Jas" evidence="2">
    <location>
        <begin position="124"/>
        <end position="142"/>
    </location>
</feature>
<feature type="short sequence motif" description="Nuclear localization signal" evidence="4">
    <location>
        <begin position="126"/>
        <end position="133"/>
    </location>
</feature>
<comment type="function">
    <text evidence="1">Repressor of jasmonate responses.</text>
</comment>
<comment type="subcellular location">
    <subcellularLocation>
        <location evidence="4">Nucleus</location>
    </subcellularLocation>
</comment>
<comment type="PTM">
    <text evidence="1">Ubiquitinated. Targeted for degradation by the SCF(COI1) E3 ubiquitin ligase-proteasome pathway during jasmonate signaling.</text>
</comment>
<comment type="similarity">
    <text evidence="7">Belongs to the TIFY/JAZ family.</text>
</comment>